<reference key="1">
    <citation type="journal article" date="2008" name="J. Bacteriol.">
        <title>The complete genome sequence of Actinobacillus pleuropneumoniae L20 (serotype 5b).</title>
        <authorList>
            <person name="Foote S.J."/>
            <person name="Bosse J.T."/>
            <person name="Bouevitch A.B."/>
            <person name="Langford P.R."/>
            <person name="Young N.M."/>
            <person name="Nash J.H.E."/>
        </authorList>
    </citation>
    <scope>NUCLEOTIDE SEQUENCE [LARGE SCALE GENOMIC DNA]</scope>
    <source>
        <strain>L20</strain>
    </source>
</reference>
<comment type="function">
    <text evidence="1">Catalyzes the specific phosphorylation of the 3-hydroxyl group of shikimic acid using ATP as a cosubstrate.</text>
</comment>
<comment type="catalytic activity">
    <reaction evidence="1">
        <text>shikimate + ATP = 3-phosphoshikimate + ADP + H(+)</text>
        <dbReference type="Rhea" id="RHEA:13121"/>
        <dbReference type="ChEBI" id="CHEBI:15378"/>
        <dbReference type="ChEBI" id="CHEBI:30616"/>
        <dbReference type="ChEBI" id="CHEBI:36208"/>
        <dbReference type="ChEBI" id="CHEBI:145989"/>
        <dbReference type="ChEBI" id="CHEBI:456216"/>
        <dbReference type="EC" id="2.7.1.71"/>
    </reaction>
</comment>
<comment type="cofactor">
    <cofactor evidence="1">
        <name>Mg(2+)</name>
        <dbReference type="ChEBI" id="CHEBI:18420"/>
    </cofactor>
    <text evidence="1">Binds 1 Mg(2+) ion per subunit.</text>
</comment>
<comment type="pathway">
    <text evidence="1">Metabolic intermediate biosynthesis; chorismate biosynthesis; chorismate from D-erythrose 4-phosphate and phosphoenolpyruvate: step 5/7.</text>
</comment>
<comment type="subunit">
    <text evidence="1">Monomer.</text>
</comment>
<comment type="subcellular location">
    <subcellularLocation>
        <location evidence="1">Cytoplasm</location>
    </subcellularLocation>
</comment>
<comment type="similarity">
    <text evidence="1">Belongs to the shikimate kinase family.</text>
</comment>
<gene>
    <name evidence="1" type="primary">aroK</name>
    <name type="ordered locus">APL_0194</name>
</gene>
<sequence length="173" mass="19456">MAEKRNIFLIGPMGAGKSTIGRQLAQMLGMEFIDSDAVIEERAGADIDWIFDLEGETGFRKREERIINELTQNQGVVLSTGGGSVLSKENRNVLSARGIVIYLETTVDKQFERTQRDKKRPLLQTENPRETLEALAKVRNPLYEEIADITLQTDEQSAKLVATHIIELIDNLQ</sequence>
<proteinExistence type="inferred from homology"/>
<keyword id="KW-0028">Amino-acid biosynthesis</keyword>
<keyword id="KW-0057">Aromatic amino acid biosynthesis</keyword>
<keyword id="KW-0067">ATP-binding</keyword>
<keyword id="KW-0963">Cytoplasm</keyword>
<keyword id="KW-0418">Kinase</keyword>
<keyword id="KW-0460">Magnesium</keyword>
<keyword id="KW-0479">Metal-binding</keyword>
<keyword id="KW-0547">Nucleotide-binding</keyword>
<keyword id="KW-1185">Reference proteome</keyword>
<keyword id="KW-0808">Transferase</keyword>
<feature type="chain" id="PRO_1000022962" description="Shikimate kinase">
    <location>
        <begin position="1"/>
        <end position="173"/>
    </location>
</feature>
<feature type="binding site" evidence="1">
    <location>
        <begin position="14"/>
        <end position="19"/>
    </location>
    <ligand>
        <name>ATP</name>
        <dbReference type="ChEBI" id="CHEBI:30616"/>
    </ligand>
</feature>
<feature type="binding site" evidence="1">
    <location>
        <position position="18"/>
    </location>
    <ligand>
        <name>Mg(2+)</name>
        <dbReference type="ChEBI" id="CHEBI:18420"/>
    </ligand>
</feature>
<feature type="binding site" evidence="1">
    <location>
        <position position="36"/>
    </location>
    <ligand>
        <name>substrate</name>
    </ligand>
</feature>
<feature type="binding site" evidence="1">
    <location>
        <position position="60"/>
    </location>
    <ligand>
        <name>substrate</name>
    </ligand>
</feature>
<feature type="binding site" evidence="1">
    <location>
        <position position="82"/>
    </location>
    <ligand>
        <name>substrate</name>
    </ligand>
</feature>
<feature type="binding site" evidence="1">
    <location>
        <position position="120"/>
    </location>
    <ligand>
        <name>ATP</name>
        <dbReference type="ChEBI" id="CHEBI:30616"/>
    </ligand>
</feature>
<feature type="binding site" evidence="1">
    <location>
        <position position="139"/>
    </location>
    <ligand>
        <name>substrate</name>
    </ligand>
</feature>
<feature type="binding site" evidence="1">
    <location>
        <position position="156"/>
    </location>
    <ligand>
        <name>ATP</name>
        <dbReference type="ChEBI" id="CHEBI:30616"/>
    </ligand>
</feature>
<organism>
    <name type="scientific">Actinobacillus pleuropneumoniae serotype 5b (strain L20)</name>
    <dbReference type="NCBI Taxonomy" id="416269"/>
    <lineage>
        <taxon>Bacteria</taxon>
        <taxon>Pseudomonadati</taxon>
        <taxon>Pseudomonadota</taxon>
        <taxon>Gammaproteobacteria</taxon>
        <taxon>Pasteurellales</taxon>
        <taxon>Pasteurellaceae</taxon>
        <taxon>Actinobacillus</taxon>
    </lineage>
</organism>
<name>AROK_ACTP2</name>
<evidence type="ECO:0000255" key="1">
    <source>
        <dbReference type="HAMAP-Rule" id="MF_00109"/>
    </source>
</evidence>
<dbReference type="EC" id="2.7.1.71" evidence="1"/>
<dbReference type="EMBL" id="CP000569">
    <property type="protein sequence ID" value="ABN73302.1"/>
    <property type="molecule type" value="Genomic_DNA"/>
</dbReference>
<dbReference type="RefSeq" id="WP_005618763.1">
    <property type="nucleotide sequence ID" value="NC_009053.1"/>
</dbReference>
<dbReference type="SMR" id="A3MYR6"/>
<dbReference type="STRING" id="416269.APL_0194"/>
<dbReference type="EnsemblBacteria" id="ABN73302">
    <property type="protein sequence ID" value="ABN73302"/>
    <property type="gene ID" value="APL_0194"/>
</dbReference>
<dbReference type="GeneID" id="48598341"/>
<dbReference type="KEGG" id="apl:APL_0194"/>
<dbReference type="eggNOG" id="COG0703">
    <property type="taxonomic scope" value="Bacteria"/>
</dbReference>
<dbReference type="HOGENOM" id="CLU_057607_2_2_6"/>
<dbReference type="UniPathway" id="UPA00053">
    <property type="reaction ID" value="UER00088"/>
</dbReference>
<dbReference type="Proteomes" id="UP000001432">
    <property type="component" value="Chromosome"/>
</dbReference>
<dbReference type="GO" id="GO:0005829">
    <property type="term" value="C:cytosol"/>
    <property type="evidence" value="ECO:0007669"/>
    <property type="project" value="TreeGrafter"/>
</dbReference>
<dbReference type="GO" id="GO:0005524">
    <property type="term" value="F:ATP binding"/>
    <property type="evidence" value="ECO:0007669"/>
    <property type="project" value="UniProtKB-UniRule"/>
</dbReference>
<dbReference type="GO" id="GO:0000287">
    <property type="term" value="F:magnesium ion binding"/>
    <property type="evidence" value="ECO:0007669"/>
    <property type="project" value="UniProtKB-UniRule"/>
</dbReference>
<dbReference type="GO" id="GO:0004765">
    <property type="term" value="F:shikimate kinase activity"/>
    <property type="evidence" value="ECO:0007669"/>
    <property type="project" value="UniProtKB-UniRule"/>
</dbReference>
<dbReference type="GO" id="GO:0008652">
    <property type="term" value="P:amino acid biosynthetic process"/>
    <property type="evidence" value="ECO:0007669"/>
    <property type="project" value="UniProtKB-KW"/>
</dbReference>
<dbReference type="GO" id="GO:0009073">
    <property type="term" value="P:aromatic amino acid family biosynthetic process"/>
    <property type="evidence" value="ECO:0007669"/>
    <property type="project" value="UniProtKB-KW"/>
</dbReference>
<dbReference type="GO" id="GO:0009423">
    <property type="term" value="P:chorismate biosynthetic process"/>
    <property type="evidence" value="ECO:0007669"/>
    <property type="project" value="UniProtKB-UniRule"/>
</dbReference>
<dbReference type="CDD" id="cd00464">
    <property type="entry name" value="SK"/>
    <property type="match status" value="1"/>
</dbReference>
<dbReference type="FunFam" id="3.40.50.300:FF:000099">
    <property type="entry name" value="Shikimate kinase 1"/>
    <property type="match status" value="1"/>
</dbReference>
<dbReference type="Gene3D" id="3.40.50.300">
    <property type="entry name" value="P-loop containing nucleotide triphosphate hydrolases"/>
    <property type="match status" value="1"/>
</dbReference>
<dbReference type="HAMAP" id="MF_00109">
    <property type="entry name" value="Shikimate_kinase"/>
    <property type="match status" value="1"/>
</dbReference>
<dbReference type="InterPro" id="IPR027417">
    <property type="entry name" value="P-loop_NTPase"/>
</dbReference>
<dbReference type="InterPro" id="IPR031322">
    <property type="entry name" value="Shikimate/glucono_kinase"/>
</dbReference>
<dbReference type="InterPro" id="IPR000623">
    <property type="entry name" value="Shikimate_kinase/TSH1"/>
</dbReference>
<dbReference type="InterPro" id="IPR023000">
    <property type="entry name" value="Shikimate_kinase_CS"/>
</dbReference>
<dbReference type="NCBIfam" id="NF003456">
    <property type="entry name" value="PRK05057.1"/>
    <property type="match status" value="1"/>
</dbReference>
<dbReference type="PANTHER" id="PTHR21087">
    <property type="entry name" value="SHIKIMATE KINASE"/>
    <property type="match status" value="1"/>
</dbReference>
<dbReference type="PANTHER" id="PTHR21087:SF16">
    <property type="entry name" value="SHIKIMATE KINASE 1, CHLOROPLASTIC"/>
    <property type="match status" value="1"/>
</dbReference>
<dbReference type="Pfam" id="PF01202">
    <property type="entry name" value="SKI"/>
    <property type="match status" value="1"/>
</dbReference>
<dbReference type="PRINTS" id="PR01100">
    <property type="entry name" value="SHIKIMTKNASE"/>
</dbReference>
<dbReference type="SUPFAM" id="SSF52540">
    <property type="entry name" value="P-loop containing nucleoside triphosphate hydrolases"/>
    <property type="match status" value="1"/>
</dbReference>
<dbReference type="PROSITE" id="PS01128">
    <property type="entry name" value="SHIKIMATE_KINASE"/>
    <property type="match status" value="1"/>
</dbReference>
<accession>A3MYR6</accession>
<protein>
    <recommendedName>
        <fullName evidence="1">Shikimate kinase</fullName>
        <shortName evidence="1">SK</shortName>
        <ecNumber evidence="1">2.7.1.71</ecNumber>
    </recommendedName>
</protein>